<dbReference type="EC" id="6.3.5.-" evidence="1"/>
<dbReference type="EMBL" id="CP000103">
    <property type="protein sequence ID" value="ABB73631.1"/>
    <property type="molecule type" value="Genomic_DNA"/>
</dbReference>
<dbReference type="RefSeq" id="WP_011379685.1">
    <property type="nucleotide sequence ID" value="NC_007614.1"/>
</dbReference>
<dbReference type="SMR" id="Q2YC90"/>
<dbReference type="STRING" id="323848.Nmul_A0323"/>
<dbReference type="KEGG" id="nmu:Nmul_A0323"/>
<dbReference type="eggNOG" id="COG0064">
    <property type="taxonomic scope" value="Bacteria"/>
</dbReference>
<dbReference type="HOGENOM" id="CLU_019240_0_0_4"/>
<dbReference type="OrthoDB" id="9804078at2"/>
<dbReference type="Proteomes" id="UP000002718">
    <property type="component" value="Chromosome"/>
</dbReference>
<dbReference type="GO" id="GO:0050566">
    <property type="term" value="F:asparaginyl-tRNA synthase (glutamine-hydrolyzing) activity"/>
    <property type="evidence" value="ECO:0007669"/>
    <property type="project" value="RHEA"/>
</dbReference>
<dbReference type="GO" id="GO:0005524">
    <property type="term" value="F:ATP binding"/>
    <property type="evidence" value="ECO:0007669"/>
    <property type="project" value="UniProtKB-KW"/>
</dbReference>
<dbReference type="GO" id="GO:0050567">
    <property type="term" value="F:glutaminyl-tRNA synthase (glutamine-hydrolyzing) activity"/>
    <property type="evidence" value="ECO:0007669"/>
    <property type="project" value="UniProtKB-UniRule"/>
</dbReference>
<dbReference type="GO" id="GO:0070681">
    <property type="term" value="P:glutaminyl-tRNAGln biosynthesis via transamidation"/>
    <property type="evidence" value="ECO:0007669"/>
    <property type="project" value="TreeGrafter"/>
</dbReference>
<dbReference type="GO" id="GO:0006412">
    <property type="term" value="P:translation"/>
    <property type="evidence" value="ECO:0007669"/>
    <property type="project" value="UniProtKB-UniRule"/>
</dbReference>
<dbReference type="FunFam" id="1.10.10.410:FF:000001">
    <property type="entry name" value="Aspartyl/glutamyl-tRNA(Asn/Gln) amidotransferase subunit B"/>
    <property type="match status" value="1"/>
</dbReference>
<dbReference type="FunFam" id="1.10.150.380:FF:000001">
    <property type="entry name" value="Aspartyl/glutamyl-tRNA(Asn/Gln) amidotransferase subunit B"/>
    <property type="match status" value="1"/>
</dbReference>
<dbReference type="Gene3D" id="1.10.10.410">
    <property type="match status" value="1"/>
</dbReference>
<dbReference type="Gene3D" id="1.10.150.380">
    <property type="entry name" value="GatB domain, N-terminal subdomain"/>
    <property type="match status" value="1"/>
</dbReference>
<dbReference type="HAMAP" id="MF_00121">
    <property type="entry name" value="GatB"/>
    <property type="match status" value="1"/>
</dbReference>
<dbReference type="InterPro" id="IPR017959">
    <property type="entry name" value="Asn/Gln-tRNA_amidoTrfase_suB/E"/>
</dbReference>
<dbReference type="InterPro" id="IPR006075">
    <property type="entry name" value="Asn/Gln-tRNA_Trfase_suB/E_cat"/>
</dbReference>
<dbReference type="InterPro" id="IPR018027">
    <property type="entry name" value="Asn/Gln_amidotransferase"/>
</dbReference>
<dbReference type="InterPro" id="IPR003789">
    <property type="entry name" value="Asn/Gln_tRNA_amidoTrase-B-like"/>
</dbReference>
<dbReference type="InterPro" id="IPR004413">
    <property type="entry name" value="GatB"/>
</dbReference>
<dbReference type="InterPro" id="IPR042114">
    <property type="entry name" value="GatB_C_1"/>
</dbReference>
<dbReference type="InterPro" id="IPR023168">
    <property type="entry name" value="GatB_Yqey_C_2"/>
</dbReference>
<dbReference type="InterPro" id="IPR017958">
    <property type="entry name" value="Gln-tRNA_amidoTrfase_suB_CS"/>
</dbReference>
<dbReference type="InterPro" id="IPR014746">
    <property type="entry name" value="Gln_synth/guanido_kin_cat_dom"/>
</dbReference>
<dbReference type="NCBIfam" id="TIGR00133">
    <property type="entry name" value="gatB"/>
    <property type="match status" value="1"/>
</dbReference>
<dbReference type="NCBIfam" id="NF004012">
    <property type="entry name" value="PRK05477.1-2"/>
    <property type="match status" value="1"/>
</dbReference>
<dbReference type="NCBIfam" id="NF004014">
    <property type="entry name" value="PRK05477.1-4"/>
    <property type="match status" value="1"/>
</dbReference>
<dbReference type="NCBIfam" id="NF004015">
    <property type="entry name" value="PRK05477.1-5"/>
    <property type="match status" value="1"/>
</dbReference>
<dbReference type="PANTHER" id="PTHR11659">
    <property type="entry name" value="GLUTAMYL-TRNA GLN AMIDOTRANSFERASE SUBUNIT B MITOCHONDRIAL AND PROKARYOTIC PET112-RELATED"/>
    <property type="match status" value="1"/>
</dbReference>
<dbReference type="PANTHER" id="PTHR11659:SF0">
    <property type="entry name" value="GLUTAMYL-TRNA(GLN) AMIDOTRANSFERASE SUBUNIT B, MITOCHONDRIAL"/>
    <property type="match status" value="1"/>
</dbReference>
<dbReference type="Pfam" id="PF02934">
    <property type="entry name" value="GatB_N"/>
    <property type="match status" value="1"/>
</dbReference>
<dbReference type="Pfam" id="PF02637">
    <property type="entry name" value="GatB_Yqey"/>
    <property type="match status" value="1"/>
</dbReference>
<dbReference type="SMART" id="SM00845">
    <property type="entry name" value="GatB_Yqey"/>
    <property type="match status" value="1"/>
</dbReference>
<dbReference type="SUPFAM" id="SSF89095">
    <property type="entry name" value="GatB/YqeY motif"/>
    <property type="match status" value="1"/>
</dbReference>
<dbReference type="SUPFAM" id="SSF55931">
    <property type="entry name" value="Glutamine synthetase/guanido kinase"/>
    <property type="match status" value="1"/>
</dbReference>
<dbReference type="PROSITE" id="PS01234">
    <property type="entry name" value="GATB"/>
    <property type="match status" value="1"/>
</dbReference>
<keyword id="KW-0067">ATP-binding</keyword>
<keyword id="KW-0436">Ligase</keyword>
<keyword id="KW-0547">Nucleotide-binding</keyword>
<keyword id="KW-0648">Protein biosynthesis</keyword>
<keyword id="KW-1185">Reference proteome</keyword>
<proteinExistence type="inferred from homology"/>
<feature type="chain" id="PRO_0000241247" description="Aspartyl/glutamyl-tRNA(Asn/Gln) amidotransferase subunit B">
    <location>
        <begin position="1"/>
        <end position="496"/>
    </location>
</feature>
<evidence type="ECO:0000255" key="1">
    <source>
        <dbReference type="HAMAP-Rule" id="MF_00121"/>
    </source>
</evidence>
<organism>
    <name type="scientific">Nitrosospira multiformis (strain ATCC 25196 / NCIMB 11849 / C 71)</name>
    <dbReference type="NCBI Taxonomy" id="323848"/>
    <lineage>
        <taxon>Bacteria</taxon>
        <taxon>Pseudomonadati</taxon>
        <taxon>Pseudomonadota</taxon>
        <taxon>Betaproteobacteria</taxon>
        <taxon>Nitrosomonadales</taxon>
        <taxon>Nitrosomonadaceae</taxon>
        <taxon>Nitrosospira</taxon>
    </lineage>
</organism>
<comment type="function">
    <text evidence="1">Allows the formation of correctly charged Asn-tRNA(Asn) or Gln-tRNA(Gln) through the transamidation of misacylated Asp-tRNA(Asn) or Glu-tRNA(Gln) in organisms which lack either or both of asparaginyl-tRNA or glutaminyl-tRNA synthetases. The reaction takes place in the presence of glutamine and ATP through an activated phospho-Asp-tRNA(Asn) or phospho-Glu-tRNA(Gln).</text>
</comment>
<comment type="catalytic activity">
    <reaction evidence="1">
        <text>L-glutamyl-tRNA(Gln) + L-glutamine + ATP + H2O = L-glutaminyl-tRNA(Gln) + L-glutamate + ADP + phosphate + H(+)</text>
        <dbReference type="Rhea" id="RHEA:17521"/>
        <dbReference type="Rhea" id="RHEA-COMP:9681"/>
        <dbReference type="Rhea" id="RHEA-COMP:9684"/>
        <dbReference type="ChEBI" id="CHEBI:15377"/>
        <dbReference type="ChEBI" id="CHEBI:15378"/>
        <dbReference type="ChEBI" id="CHEBI:29985"/>
        <dbReference type="ChEBI" id="CHEBI:30616"/>
        <dbReference type="ChEBI" id="CHEBI:43474"/>
        <dbReference type="ChEBI" id="CHEBI:58359"/>
        <dbReference type="ChEBI" id="CHEBI:78520"/>
        <dbReference type="ChEBI" id="CHEBI:78521"/>
        <dbReference type="ChEBI" id="CHEBI:456216"/>
    </reaction>
</comment>
<comment type="catalytic activity">
    <reaction evidence="1">
        <text>L-aspartyl-tRNA(Asn) + L-glutamine + ATP + H2O = L-asparaginyl-tRNA(Asn) + L-glutamate + ADP + phosphate + 2 H(+)</text>
        <dbReference type="Rhea" id="RHEA:14513"/>
        <dbReference type="Rhea" id="RHEA-COMP:9674"/>
        <dbReference type="Rhea" id="RHEA-COMP:9677"/>
        <dbReference type="ChEBI" id="CHEBI:15377"/>
        <dbReference type="ChEBI" id="CHEBI:15378"/>
        <dbReference type="ChEBI" id="CHEBI:29985"/>
        <dbReference type="ChEBI" id="CHEBI:30616"/>
        <dbReference type="ChEBI" id="CHEBI:43474"/>
        <dbReference type="ChEBI" id="CHEBI:58359"/>
        <dbReference type="ChEBI" id="CHEBI:78515"/>
        <dbReference type="ChEBI" id="CHEBI:78516"/>
        <dbReference type="ChEBI" id="CHEBI:456216"/>
    </reaction>
</comment>
<comment type="subunit">
    <text evidence="1">Heterotrimer of A, B and C subunits.</text>
</comment>
<comment type="similarity">
    <text evidence="1">Belongs to the GatB/GatE family. GatB subfamily.</text>
</comment>
<gene>
    <name evidence="1" type="primary">gatB</name>
    <name type="ordered locus">Nmul_A0323</name>
</gene>
<accession>Q2YC90</accession>
<protein>
    <recommendedName>
        <fullName evidence="1">Aspartyl/glutamyl-tRNA(Asn/Gln) amidotransferase subunit B</fullName>
        <shortName evidence="1">Asp/Glu-ADT subunit B</shortName>
        <ecNumber evidence="1">6.3.5.-</ecNumber>
    </recommendedName>
</protein>
<sequence length="496" mass="54970">MQWETVIGLEVHAQLSTESKIFSGASTAFGAAPNAEACAVDLALPGVLPVLNRGAVERAIRFGLAVGAKINSPSIFARKNYFYPDLPKGYQISQYELPVVEGGHIQLQVVQDGKEQEKTVRLVRAHLEEDAGKSLHEDFHGMSGIDLNRAGTPLLEIVSEPDMRSSAEAVAYAKTLHTLVRWIGICDGNMQEGSFRCDANVSVRPRGSDKLGTRCEIKNLNSFRFLEKAIDYEVRRQVEILEDGGSIQQQTRLFDPEKGETRAMRSKEDAQDYRYFPDPDLLPLEISGNWIEEVKKGLPELPQQIRTRFEHDYGLSMYDALLLTGDRDISEYYEAVVGKLPSDPKLCANWVMGEVSAYLNNEGKSFDVCPLSPAQLAQLLLRIKDGTISGKIAKDVFRQMWAQAGTESISWRNSEGVDEGLADRIIDSQGLRQISDSSALENLVHEVLAANPKSVEEFKAGKEKAFNALMGQVMKAARGKANPAQVNEILRKKLTE</sequence>
<name>GATB_NITMU</name>
<reference key="1">
    <citation type="submission" date="2005-08" db="EMBL/GenBank/DDBJ databases">
        <title>Complete sequence of chromosome 1 of Nitrosospira multiformis ATCC 25196.</title>
        <authorList>
            <person name="Copeland A."/>
            <person name="Lucas S."/>
            <person name="Lapidus A."/>
            <person name="Barry K."/>
            <person name="Detter J.C."/>
            <person name="Glavina T."/>
            <person name="Hammon N."/>
            <person name="Israni S."/>
            <person name="Pitluck S."/>
            <person name="Chain P."/>
            <person name="Malfatti S."/>
            <person name="Shin M."/>
            <person name="Vergez L."/>
            <person name="Schmutz J."/>
            <person name="Larimer F."/>
            <person name="Land M."/>
            <person name="Hauser L."/>
            <person name="Kyrpides N."/>
            <person name="Lykidis A."/>
            <person name="Richardson P."/>
        </authorList>
    </citation>
    <scope>NUCLEOTIDE SEQUENCE [LARGE SCALE GENOMIC DNA]</scope>
    <source>
        <strain>ATCC 25196 / NCIMB 11849 / C 71</strain>
    </source>
</reference>